<sequence>MSVPVQHPMYIDGQFVTWRGDAWIDVVNPATEAVISRIPDGQAEDARKAIDAAERAQPEWEALPAIERASWLRKISAGIRERASEISALIVEEGGKIQQLAEVEVAFTADYIDYMAEWARRYEGEIIQSDRPGENILLFKRALGVTTGILPWNFPFFLIARKMAPALLTGNTIVIKPSEFTPNNAIAFAKIVDEIGLPRGVFNLVLGRGETVGQELAGNPKVAMVSMTGSVSAGEKIMATAAKNITKVCLELGGKAPAIVMDDADLELAVKAIVDSRVINSGQVCNCAERVYVQKGIYDQFVNRLGEAMQAVQFGNPAERNDIAMGPLINAAALERVEQKVARAVEEGARVAFGGKAVEGKGYYYPPTLLLDVRQEMSIMHEETFGPVLPVVAFDTLEDAISMANDSDYGLTSSIYTQNLNVAMKAIKGLKFGETYINRENFEAMQGFHAGWRKSGIGGADGKHGLHEYLQTQVVYLQS</sequence>
<proteinExistence type="evidence at protein level"/>
<organism>
    <name type="scientific">Escherichia coli (strain K12)</name>
    <dbReference type="NCBI Taxonomy" id="83333"/>
    <lineage>
        <taxon>Bacteria</taxon>
        <taxon>Pseudomonadati</taxon>
        <taxon>Pseudomonadota</taxon>
        <taxon>Gammaproteobacteria</taxon>
        <taxon>Enterobacterales</taxon>
        <taxon>Enterobacteriaceae</taxon>
        <taxon>Escherichia</taxon>
    </lineage>
</organism>
<keyword id="KW-0002">3D-structure</keyword>
<keyword id="KW-0903">Direct protein sequencing</keyword>
<keyword id="KW-0520">NAD</keyword>
<keyword id="KW-0560">Oxidoreductase</keyword>
<keyword id="KW-1185">Reference proteome</keyword>
<feature type="initiator methionine" description="Removed" evidence="4 11">
    <location>
        <position position="1"/>
    </location>
</feature>
<feature type="chain" id="PRO_0000056564" description="Lactaldehyde dehydrogenase">
    <location>
        <begin position="2"/>
        <end position="479"/>
    </location>
</feature>
<feature type="active site" evidence="15">
    <location>
        <position position="251"/>
    </location>
</feature>
<feature type="active site" evidence="15">
    <location>
        <position position="285"/>
    </location>
</feature>
<feature type="binding site" evidence="2 19">
    <location>
        <position position="150"/>
    </location>
    <ligand>
        <name>NAD(+)</name>
        <dbReference type="ChEBI" id="CHEBI:57540"/>
    </ligand>
</feature>
<feature type="binding site" evidence="2 19">
    <location>
        <position position="161"/>
    </location>
    <ligand>
        <name>(S)-lactate</name>
        <dbReference type="ChEBI" id="CHEBI:16651"/>
    </ligand>
</feature>
<feature type="binding site" evidence="2 19">
    <location>
        <begin position="176"/>
        <end position="179"/>
    </location>
    <ligand>
        <name>NAD(+)</name>
        <dbReference type="ChEBI" id="CHEBI:57540"/>
    </ligand>
</feature>
<feature type="binding site" evidence="2 19">
    <location>
        <position position="214"/>
    </location>
    <ligand>
        <name>NAD(+)</name>
        <dbReference type="ChEBI" id="CHEBI:57540"/>
    </ligand>
</feature>
<feature type="binding site" evidence="2 19">
    <location>
        <position position="230"/>
    </location>
    <ligand>
        <name>NAD(+)</name>
        <dbReference type="ChEBI" id="CHEBI:57540"/>
    </ligand>
</feature>
<feature type="binding site" evidence="2 19">
    <location>
        <position position="251"/>
    </location>
    <ligand>
        <name>(S)-lactate</name>
        <dbReference type="ChEBI" id="CHEBI:16651"/>
    </ligand>
</feature>
<feature type="binding site" evidence="2 19">
    <location>
        <position position="286"/>
    </location>
    <ligand>
        <name>(S)-lactate</name>
        <dbReference type="ChEBI" id="CHEBI:16651"/>
    </ligand>
</feature>
<feature type="binding site" evidence="2 19">
    <location>
        <position position="336"/>
    </location>
    <ligand>
        <name>NAD(+)</name>
        <dbReference type="ChEBI" id="CHEBI:57540"/>
    </ligand>
</feature>
<feature type="binding site" evidence="2 19">
    <location>
        <position position="443"/>
    </location>
    <ligand>
        <name>(S)-lactate</name>
        <dbReference type="ChEBI" id="CHEBI:16651"/>
    </ligand>
</feature>
<feature type="binding site" evidence="2 19">
    <location>
        <position position="449"/>
    </location>
    <ligand>
        <name>(S)-lactate</name>
        <dbReference type="ChEBI" id="CHEBI:16651"/>
    </ligand>
</feature>
<feature type="site" description="Important for substrate specificity" evidence="16">
    <location>
        <position position="286"/>
    </location>
</feature>
<feature type="mutagenesis site" description="Can bind and use NADP(+) as coenzyme. 16-fold increase in catalytic efficiency with NAD(+) as coenzyme." evidence="3">
    <original>F</original>
    <variation>T</variation>
    <location>
        <position position="180"/>
    </location>
</feature>
<feature type="mutagenesis site" description="4-fold increase in catalytic efficiency with L-lactaldehyde as substrate. Shows expanded substrate specificity." evidence="5">
    <original>N</original>
    <variation>E</variation>
    <location>
        <position position="286"/>
    </location>
</feature>
<feature type="mutagenesis site" description="15-fold increase in catalytic efficiency with L-lactaldehyde as substrate. Shows expanded substrate specificity." evidence="5">
    <original>N</original>
    <variation>H</variation>
    <location>
        <position position="286"/>
    </location>
</feature>
<feature type="mutagenesis site" description="6-fold increase in catalytic efficiency with L-lactaldehyde as substrate. Shows expanded substrate specificity." evidence="5">
    <original>N</original>
    <variation>T</variation>
    <location>
        <position position="286"/>
    </location>
</feature>
<feature type="strand" evidence="21">
    <location>
        <begin position="9"/>
        <end position="11"/>
    </location>
</feature>
<feature type="strand" evidence="21">
    <location>
        <begin position="14"/>
        <end position="16"/>
    </location>
</feature>
<feature type="strand" evidence="21">
    <location>
        <begin position="23"/>
        <end position="27"/>
    </location>
</feature>
<feature type="turn" evidence="21">
    <location>
        <begin position="29"/>
        <end position="31"/>
    </location>
</feature>
<feature type="strand" evidence="21">
    <location>
        <begin position="34"/>
        <end position="39"/>
    </location>
</feature>
<feature type="helix" evidence="21">
    <location>
        <begin position="43"/>
        <end position="62"/>
    </location>
</feature>
<feature type="helix" evidence="21">
    <location>
        <begin position="65"/>
        <end position="81"/>
    </location>
</feature>
<feature type="helix" evidence="21">
    <location>
        <begin position="83"/>
        <end position="94"/>
    </location>
</feature>
<feature type="helix" evidence="21">
    <location>
        <begin position="98"/>
        <end position="116"/>
    </location>
</feature>
<feature type="turn" evidence="21">
    <location>
        <begin position="117"/>
        <end position="121"/>
    </location>
</feature>
<feature type="strand" evidence="21">
    <location>
        <begin position="125"/>
        <end position="127"/>
    </location>
</feature>
<feature type="strand" evidence="21">
    <location>
        <begin position="134"/>
        <end position="142"/>
    </location>
</feature>
<feature type="strand" evidence="21">
    <location>
        <begin position="144"/>
        <end position="149"/>
    </location>
</feature>
<feature type="strand" evidence="21">
    <location>
        <begin position="152"/>
        <end position="154"/>
    </location>
</feature>
<feature type="helix" evidence="21">
    <location>
        <begin position="155"/>
        <end position="168"/>
    </location>
</feature>
<feature type="strand" evidence="21">
    <location>
        <begin position="172"/>
        <end position="176"/>
    </location>
</feature>
<feature type="helix" evidence="21">
    <location>
        <begin position="183"/>
        <end position="195"/>
    </location>
</feature>
<feature type="strand" evidence="21">
    <location>
        <begin position="201"/>
        <end position="204"/>
    </location>
</feature>
<feature type="turn" evidence="21">
    <location>
        <begin position="209"/>
        <end position="211"/>
    </location>
</feature>
<feature type="helix" evidence="21">
    <location>
        <begin position="212"/>
        <end position="218"/>
    </location>
</feature>
<feature type="strand" evidence="21">
    <location>
        <begin position="222"/>
        <end position="229"/>
    </location>
</feature>
<feature type="helix" evidence="21">
    <location>
        <begin position="231"/>
        <end position="242"/>
    </location>
</feature>
<feature type="turn" evidence="21">
    <location>
        <begin position="243"/>
        <end position="245"/>
    </location>
</feature>
<feature type="strand" evidence="21">
    <location>
        <begin position="247"/>
        <end position="251"/>
    </location>
</feature>
<feature type="strand" evidence="21">
    <location>
        <begin position="257"/>
        <end position="260"/>
    </location>
</feature>
<feature type="helix" evidence="21">
    <location>
        <begin position="266"/>
        <end position="274"/>
    </location>
</feature>
<feature type="turn" evidence="21">
    <location>
        <begin position="279"/>
        <end position="282"/>
    </location>
</feature>
<feature type="strand" evidence="21">
    <location>
        <begin position="285"/>
        <end position="287"/>
    </location>
</feature>
<feature type="strand" evidence="21">
    <location>
        <begin position="289"/>
        <end position="294"/>
    </location>
</feature>
<feature type="helix" evidence="21">
    <location>
        <begin position="295"/>
        <end position="297"/>
    </location>
</feature>
<feature type="helix" evidence="21">
    <location>
        <begin position="298"/>
        <end position="310"/>
    </location>
</feature>
<feature type="turn" evidence="21">
    <location>
        <begin position="317"/>
        <end position="319"/>
    </location>
</feature>
<feature type="helix" evidence="21">
    <location>
        <begin position="331"/>
        <end position="346"/>
    </location>
</feature>
<feature type="strand" evidence="21">
    <location>
        <begin position="350"/>
        <end position="353"/>
    </location>
</feature>
<feature type="strand" evidence="21">
    <location>
        <begin position="360"/>
        <end position="362"/>
    </location>
</feature>
<feature type="strand" evidence="21">
    <location>
        <begin position="368"/>
        <end position="372"/>
    </location>
</feature>
<feature type="helix" evidence="21">
    <location>
        <begin position="378"/>
        <end position="381"/>
    </location>
</feature>
<feature type="strand" evidence="21">
    <location>
        <begin position="386"/>
        <end position="396"/>
    </location>
</feature>
<feature type="helix" evidence="21">
    <location>
        <begin position="397"/>
        <end position="405"/>
    </location>
</feature>
<feature type="strand" evidence="21">
    <location>
        <begin position="407"/>
        <end position="416"/>
    </location>
</feature>
<feature type="helix" evidence="21">
    <location>
        <begin position="420"/>
        <end position="429"/>
    </location>
</feature>
<feature type="strand" evidence="21">
    <location>
        <begin position="432"/>
        <end position="439"/>
    </location>
</feature>
<feature type="strand" evidence="21">
    <location>
        <begin position="456"/>
        <end position="458"/>
    </location>
</feature>
<feature type="helix" evidence="21">
    <location>
        <begin position="462"/>
        <end position="467"/>
    </location>
</feature>
<feature type="strand" evidence="21">
    <location>
        <begin position="470"/>
        <end position="478"/>
    </location>
</feature>
<comment type="function">
    <text evidence="1 5 6 7 8 9 10">Catalyzes the irreversible oxidation of L-lactaldehyde to L-lactate (PubMed:27671251, PubMed:3298215, PubMed:3308886, PubMed:6345530). Also shows high activity with glycolaldehyde and L-glyceraldehyde (PubMed:16731973, PubMed:31850327, PubMed:3275622, PubMed:3308886, PubMed:6345530). Has weaker activity with various aldehydes such as methylglyoxal, propionaldehyde or benzaldehyde (PubMed:16731973, PubMed:3308886). Involved in the degradation of lactaldehyde produced during metabolism of L-fucose and L-rhamnose (PubMed:3275622, PubMed:3298215). It may be involved in several other metabolic pathways (PubMed:3308886).</text>
</comment>
<comment type="catalytic activity">
    <reaction evidence="5 8 9 10">
        <text>(S)-lactaldehyde + NAD(+) + H2O = (S)-lactate + NADH + 2 H(+)</text>
        <dbReference type="Rhea" id="RHEA:14277"/>
        <dbReference type="ChEBI" id="CHEBI:15377"/>
        <dbReference type="ChEBI" id="CHEBI:15378"/>
        <dbReference type="ChEBI" id="CHEBI:16651"/>
        <dbReference type="ChEBI" id="CHEBI:18041"/>
        <dbReference type="ChEBI" id="CHEBI:57540"/>
        <dbReference type="ChEBI" id="CHEBI:57945"/>
        <dbReference type="EC" id="1.2.1.22"/>
    </reaction>
    <physiologicalReaction direction="left-to-right" evidence="8 9">
        <dbReference type="Rhea" id="RHEA:14278"/>
    </physiologicalReaction>
</comment>
<comment type="catalytic activity">
    <reaction evidence="1 6 7 9 10">
        <text>glycolaldehyde + NAD(+) + H2O = glycolate + NADH + 2 H(+)</text>
        <dbReference type="Rhea" id="RHEA:20001"/>
        <dbReference type="ChEBI" id="CHEBI:15377"/>
        <dbReference type="ChEBI" id="CHEBI:15378"/>
        <dbReference type="ChEBI" id="CHEBI:17071"/>
        <dbReference type="ChEBI" id="CHEBI:29805"/>
        <dbReference type="ChEBI" id="CHEBI:57540"/>
        <dbReference type="ChEBI" id="CHEBI:57945"/>
        <dbReference type="EC" id="1.2.1.21"/>
    </reaction>
    <physiologicalReaction direction="left-to-right" evidence="7 9">
        <dbReference type="Rhea" id="RHEA:20002"/>
    </physiologicalReaction>
</comment>
<comment type="activity regulation">
    <text evidence="7 9">Substrate inhibition is very strong with lactaldehyde, diminishing progressively with glycolaldehyde, glyceraldehyde or methylglyoxal (PubMed:3308886). Inhibited by p-hydroxy mercuribenzoate and by some cations, including Mn(2+), Ca(2+), Cu(2+) and Zn(2+) (PubMed:3308886). Inhibited by NADH (PubMed:3275622).</text>
</comment>
<comment type="biophysicochemical properties">
    <kinetics>
        <KM evidence="9">0.04 mM for L-lactaldehyde</KM>
        <KM evidence="5">14.5 mM for L-lactaldehyde</KM>
        <KM evidence="9">0.38 mM for glycolaldehyde</KM>
        <KM evidence="1">0.14 mM for glycolaldehyde</KM>
        <KM evidence="6">0.21 mM for glycolaldehyde</KM>
        <KM evidence="9">0.15 mM for L-glyceraldehyde</KM>
        <KM evidence="9">1 mM for methylglyoxal</KM>
        <KM evidence="1">15.2 mM for acetaldehyde</KM>
        <KM evidence="1">0.24 mM for propionaldehyde</KM>
        <KM evidence="1">0.15 mM for benzaldehyde</KM>
        <KM evidence="1">4.5 mM for phenylacetaldehyde</KM>
        <KM evidence="9">0.12 mM for NAD (in the presence of L-lactaldehyde)</KM>
        <KM evidence="9">0.28 mM for NAD (in the presence of glycolaldehyde)</KM>
        <KM evidence="1">0.038 mM for NAD (in the presence of propionaldehyde)</KM>
        <KM evidence="9">6.25 mM for NADP</KM>
        <Vmax evidence="6">1.66 umol/min/mg enzyme with glycolaldehyde as substrate</Vmax>
        <text evidence="1 5 6">kcat is 761 sec(-1) with L-lactaldehyde as substrate (PubMed:27671251). kcat is 52 sec(-1) with glycolaldehyde as substrate (PubMed:31850327). kcat is 1100 min(-1) with glycolaldehyde as substrate. kcat is 37 min(-1) with acetaldehyde as substrate. kcat is 108 min(-1) with propionaldehyde as substrate. kcat is 55 min(-1) with benzaldehyde as substrate. kcat is 28 min(-1) with phenylacetaldehyde as substrate (PubMed:16731973).</text>
    </kinetics>
    <phDependence>
        <text evidence="5">Optimum pH is 10.</text>
    </phDependence>
    <temperatureDependence>
        <text evidence="5">Optimum temperature is 40 degrees Celsius.</text>
    </temperatureDependence>
</comment>
<comment type="pathway">
    <text evidence="7 8">Carbohydrate degradation; L-fucose degradation.</text>
</comment>
<comment type="pathway">
    <text evidence="7 8">Carbohydrate degradation; L-rhamnose degradation.</text>
</comment>
<comment type="subunit">
    <text evidence="1 2 9">Homotetramer.</text>
</comment>
<comment type="induction">
    <text evidence="7 9 10">Induced, under aerobic conditions, by at least three different types of molecules, the sugars fucose and rhamnose, the diol ethylene glycol and the amino acid glutamate.</text>
</comment>
<comment type="similarity">
    <text evidence="14">Belongs to the aldehyde dehydrogenase family.</text>
</comment>
<gene>
    <name type="primary">aldA</name>
    <name evidence="12" type="synonym">ald</name>
    <name type="ordered locus">b1415</name>
    <name type="ordered locus">JW1412</name>
</gene>
<evidence type="ECO:0000269" key="1">
    <source>
    </source>
</evidence>
<evidence type="ECO:0000269" key="2">
    <source>
    </source>
</evidence>
<evidence type="ECO:0000269" key="3">
    <source>
    </source>
</evidence>
<evidence type="ECO:0000269" key="4">
    <source>
    </source>
</evidence>
<evidence type="ECO:0000269" key="5">
    <source>
    </source>
</evidence>
<evidence type="ECO:0000269" key="6">
    <source>
    </source>
</evidence>
<evidence type="ECO:0000269" key="7">
    <source>
    </source>
</evidence>
<evidence type="ECO:0000269" key="8">
    <source>
    </source>
</evidence>
<evidence type="ECO:0000269" key="9">
    <source>
    </source>
</evidence>
<evidence type="ECO:0000269" key="10">
    <source>
    </source>
</evidence>
<evidence type="ECO:0000269" key="11">
    <source>
    </source>
</evidence>
<evidence type="ECO:0000303" key="12">
    <source>
    </source>
</evidence>
<evidence type="ECO:0000303" key="13">
    <source>
    </source>
</evidence>
<evidence type="ECO:0000305" key="14"/>
<evidence type="ECO:0000305" key="15">
    <source>
    </source>
</evidence>
<evidence type="ECO:0000305" key="16">
    <source>
    </source>
</evidence>
<evidence type="ECO:0007744" key="17">
    <source>
        <dbReference type="PDB" id="2HG2"/>
    </source>
</evidence>
<evidence type="ECO:0007744" key="18">
    <source>
        <dbReference type="PDB" id="2ILU"/>
    </source>
</evidence>
<evidence type="ECO:0007744" key="19">
    <source>
        <dbReference type="PDB" id="2IMP"/>
    </source>
</evidence>
<evidence type="ECO:0007744" key="20">
    <source>
        <dbReference type="PDB" id="2OPX"/>
    </source>
</evidence>
<evidence type="ECO:0007829" key="21">
    <source>
        <dbReference type="PDB" id="2IMP"/>
    </source>
</evidence>
<name>ALDA_ECOLI</name>
<dbReference type="EC" id="1.2.1.22" evidence="5 8 9 10"/>
<dbReference type="EC" id="1.2.1.21" evidence="1 6 7 9 10"/>
<dbReference type="EMBL" id="M64541">
    <property type="protein sequence ID" value="AAA23427.1"/>
    <property type="molecule type" value="Genomic_DNA"/>
</dbReference>
<dbReference type="EMBL" id="U00096">
    <property type="protein sequence ID" value="AAC74497.1"/>
    <property type="molecule type" value="Genomic_DNA"/>
</dbReference>
<dbReference type="EMBL" id="AP009048">
    <property type="protein sequence ID" value="BAA15032.1"/>
    <property type="molecule type" value="Genomic_DNA"/>
</dbReference>
<dbReference type="PIR" id="A38165">
    <property type="entry name" value="A38165"/>
</dbReference>
<dbReference type="RefSeq" id="NP_415933.1">
    <property type="nucleotide sequence ID" value="NC_000913.3"/>
</dbReference>
<dbReference type="RefSeq" id="WP_000115943.1">
    <property type="nucleotide sequence ID" value="NZ_SSZK01000021.1"/>
</dbReference>
<dbReference type="PDB" id="2HG2">
    <property type="method" value="X-ray"/>
    <property type="resolution" value="2.20 A"/>
    <property type="chains" value="A=1-479"/>
</dbReference>
<dbReference type="PDB" id="2ILU">
    <property type="method" value="X-ray"/>
    <property type="resolution" value="2.70 A"/>
    <property type="chains" value="A=1-479"/>
</dbReference>
<dbReference type="PDB" id="2IMP">
    <property type="method" value="X-ray"/>
    <property type="resolution" value="2.10 A"/>
    <property type="chains" value="A=1-479"/>
</dbReference>
<dbReference type="PDB" id="2OPX">
    <property type="method" value="X-ray"/>
    <property type="resolution" value="2.53 A"/>
    <property type="chains" value="A=1-479"/>
</dbReference>
<dbReference type="PDBsum" id="2HG2"/>
<dbReference type="PDBsum" id="2ILU"/>
<dbReference type="PDBsum" id="2IMP"/>
<dbReference type="PDBsum" id="2OPX"/>
<dbReference type="SMR" id="P25553"/>
<dbReference type="BioGRID" id="4260173">
    <property type="interactions" value="16"/>
</dbReference>
<dbReference type="BioGRID" id="850044">
    <property type="interactions" value="1"/>
</dbReference>
<dbReference type="DIP" id="DIP-9081N"/>
<dbReference type="FunCoup" id="P25553">
    <property type="interactions" value="157"/>
</dbReference>
<dbReference type="IntAct" id="P25553">
    <property type="interactions" value="5"/>
</dbReference>
<dbReference type="STRING" id="511145.b1415"/>
<dbReference type="DrugBank" id="DB03619">
    <property type="generic name" value="Deoxycholic acid"/>
</dbReference>
<dbReference type="jPOST" id="P25553"/>
<dbReference type="PaxDb" id="511145-b1415"/>
<dbReference type="EnsemblBacteria" id="AAC74497">
    <property type="protein sequence ID" value="AAC74497"/>
    <property type="gene ID" value="b1415"/>
</dbReference>
<dbReference type="GeneID" id="945672"/>
<dbReference type="KEGG" id="ecj:JW1412"/>
<dbReference type="KEGG" id="eco:b1415"/>
<dbReference type="KEGG" id="ecoc:C3026_08240"/>
<dbReference type="PATRIC" id="fig|1411691.4.peg.856"/>
<dbReference type="EchoBASE" id="EB0034"/>
<dbReference type="eggNOG" id="COG1012">
    <property type="taxonomic scope" value="Bacteria"/>
</dbReference>
<dbReference type="HOGENOM" id="CLU_005391_5_1_6"/>
<dbReference type="InParanoid" id="P25553"/>
<dbReference type="OMA" id="KTYMGPL"/>
<dbReference type="OrthoDB" id="9812625at2"/>
<dbReference type="PhylomeDB" id="P25553"/>
<dbReference type="BioCyc" id="EcoCyc:LACTALDDEHYDROG-MONOMER"/>
<dbReference type="BioCyc" id="MetaCyc:LACTALDDEHYDROG-MONOMER"/>
<dbReference type="BRENDA" id="1.2.1.22">
    <property type="organism ID" value="2026"/>
</dbReference>
<dbReference type="BRENDA" id="1.2.1.89">
    <property type="organism ID" value="2026"/>
</dbReference>
<dbReference type="SABIO-RK" id="P25553"/>
<dbReference type="UniPathway" id="UPA00541"/>
<dbReference type="UniPathway" id="UPA00563"/>
<dbReference type="EvolutionaryTrace" id="P25553"/>
<dbReference type="PRO" id="PR:P25553"/>
<dbReference type="Proteomes" id="UP000000625">
    <property type="component" value="Chromosome"/>
</dbReference>
<dbReference type="GO" id="GO:0005829">
    <property type="term" value="C:cytosol"/>
    <property type="evidence" value="ECO:0000314"/>
    <property type="project" value="EcoCyc"/>
</dbReference>
<dbReference type="GO" id="GO:0032991">
    <property type="term" value="C:protein-containing complex"/>
    <property type="evidence" value="ECO:0000314"/>
    <property type="project" value="EcoCyc"/>
</dbReference>
<dbReference type="GO" id="GO:0050569">
    <property type="term" value="F:glycolaldehyde dehydrogenase (NAD+) activity"/>
    <property type="evidence" value="ECO:0000314"/>
    <property type="project" value="EcoCyc"/>
</dbReference>
<dbReference type="GO" id="GO:0042802">
    <property type="term" value="F:identical protein binding"/>
    <property type="evidence" value="ECO:0000314"/>
    <property type="project" value="EcoCyc"/>
</dbReference>
<dbReference type="GO" id="GO:0008911">
    <property type="term" value="F:lactaldehyde dehydrogenase (NAD+) activity"/>
    <property type="evidence" value="ECO:0000314"/>
    <property type="project" value="EcoCyc"/>
</dbReference>
<dbReference type="GO" id="GO:0004777">
    <property type="term" value="F:succinate-semialdehyde dehydrogenase (NAD+) activity"/>
    <property type="evidence" value="ECO:0000250"/>
    <property type="project" value="EcoCyc"/>
</dbReference>
<dbReference type="GO" id="GO:0009450">
    <property type="term" value="P:gamma-aminobutyric acid catabolic process"/>
    <property type="evidence" value="ECO:0000318"/>
    <property type="project" value="GO_Central"/>
</dbReference>
<dbReference type="GO" id="GO:0042355">
    <property type="term" value="P:L-fucose catabolic process"/>
    <property type="evidence" value="ECO:0000270"/>
    <property type="project" value="EcoCyc"/>
</dbReference>
<dbReference type="GO" id="GO:0019301">
    <property type="term" value="P:rhamnose catabolic process"/>
    <property type="evidence" value="ECO:0000315"/>
    <property type="project" value="EcoCyc"/>
</dbReference>
<dbReference type="CDD" id="cd07088">
    <property type="entry name" value="ALDH_LactADH-AldA"/>
    <property type="match status" value="1"/>
</dbReference>
<dbReference type="FunFam" id="3.40.309.10:FF:000009">
    <property type="entry name" value="Aldehyde dehydrogenase A"/>
    <property type="match status" value="1"/>
</dbReference>
<dbReference type="FunFam" id="3.40.605.10:FF:000022">
    <property type="entry name" value="Aldehyde dehydrogenase A"/>
    <property type="match status" value="1"/>
</dbReference>
<dbReference type="Gene3D" id="3.40.605.10">
    <property type="entry name" value="Aldehyde Dehydrogenase, Chain A, domain 1"/>
    <property type="match status" value="1"/>
</dbReference>
<dbReference type="Gene3D" id="3.40.309.10">
    <property type="entry name" value="Aldehyde Dehydrogenase, Chain A, domain 2"/>
    <property type="match status" value="1"/>
</dbReference>
<dbReference type="InterPro" id="IPR016161">
    <property type="entry name" value="Ald_DH/histidinol_DH"/>
</dbReference>
<dbReference type="InterPro" id="IPR016163">
    <property type="entry name" value="Ald_DH_C"/>
</dbReference>
<dbReference type="InterPro" id="IPR016160">
    <property type="entry name" value="Ald_DH_CS_CYS"/>
</dbReference>
<dbReference type="InterPro" id="IPR029510">
    <property type="entry name" value="Ald_DH_CS_GLU"/>
</dbReference>
<dbReference type="InterPro" id="IPR016162">
    <property type="entry name" value="Ald_DH_N"/>
</dbReference>
<dbReference type="InterPro" id="IPR015590">
    <property type="entry name" value="Aldehyde_DH_dom"/>
</dbReference>
<dbReference type="InterPro" id="IPR050740">
    <property type="entry name" value="Aldehyde_DH_Superfamily"/>
</dbReference>
<dbReference type="NCBIfam" id="NF007497">
    <property type="entry name" value="PRK10090.1"/>
    <property type="match status" value="1"/>
</dbReference>
<dbReference type="PANTHER" id="PTHR43353">
    <property type="entry name" value="SUCCINATE-SEMIALDEHYDE DEHYDROGENASE, MITOCHONDRIAL"/>
    <property type="match status" value="1"/>
</dbReference>
<dbReference type="PANTHER" id="PTHR43353:SF5">
    <property type="entry name" value="SUCCINATE-SEMIALDEHYDE DEHYDROGENASE, MITOCHONDRIAL"/>
    <property type="match status" value="1"/>
</dbReference>
<dbReference type="Pfam" id="PF00171">
    <property type="entry name" value="Aldedh"/>
    <property type="match status" value="1"/>
</dbReference>
<dbReference type="SUPFAM" id="SSF53720">
    <property type="entry name" value="ALDH-like"/>
    <property type="match status" value="1"/>
</dbReference>
<dbReference type="PROSITE" id="PS00070">
    <property type="entry name" value="ALDEHYDE_DEHYDR_CYS"/>
    <property type="match status" value="1"/>
</dbReference>
<dbReference type="PROSITE" id="PS00687">
    <property type="entry name" value="ALDEHYDE_DEHYDR_GLU"/>
    <property type="match status" value="1"/>
</dbReference>
<reference key="1">
    <citation type="journal article" date="1991" name="J. Bacteriol.">
        <title>Molecular cloning and DNA sequencing of the Escherichia coli K-12 ald gene encoding aldehyde dehydrogenase.</title>
        <authorList>
            <person name="Hidalgo E."/>
            <person name="Chen Y.-M."/>
            <person name="Lin E.C.C."/>
            <person name="Aguilar J."/>
        </authorList>
    </citation>
    <scope>NUCLEOTIDE SEQUENCE [GENOMIC DNA]</scope>
    <scope>PROTEIN SEQUENCE OF 2-11</scope>
    <source>
        <strain>K12</strain>
    </source>
</reference>
<reference key="2">
    <citation type="journal article" date="1996" name="DNA Res.">
        <title>A 570-kb DNA sequence of the Escherichia coli K-12 genome corresponding to the 28.0-40.1 min region on the linkage map.</title>
        <authorList>
            <person name="Aiba H."/>
            <person name="Baba T."/>
            <person name="Fujita K."/>
            <person name="Hayashi K."/>
            <person name="Inada T."/>
            <person name="Isono K."/>
            <person name="Itoh T."/>
            <person name="Kasai H."/>
            <person name="Kashimoto K."/>
            <person name="Kimura S."/>
            <person name="Kitakawa M."/>
            <person name="Kitagawa M."/>
            <person name="Makino K."/>
            <person name="Miki T."/>
            <person name="Mizobuchi K."/>
            <person name="Mori H."/>
            <person name="Mori T."/>
            <person name="Motomura K."/>
            <person name="Nakade S."/>
            <person name="Nakamura Y."/>
            <person name="Nashimoto H."/>
            <person name="Nishio Y."/>
            <person name="Oshima T."/>
            <person name="Saito N."/>
            <person name="Sampei G."/>
            <person name="Seki Y."/>
            <person name="Sivasundaram S."/>
            <person name="Tagami H."/>
            <person name="Takeda J."/>
            <person name="Takemoto K."/>
            <person name="Takeuchi Y."/>
            <person name="Wada C."/>
            <person name="Yamamoto Y."/>
            <person name="Horiuchi T."/>
        </authorList>
    </citation>
    <scope>NUCLEOTIDE SEQUENCE [LARGE SCALE GENOMIC DNA]</scope>
    <source>
        <strain>K12 / W3110 / ATCC 27325 / DSM 5911</strain>
    </source>
</reference>
<reference key="3">
    <citation type="journal article" date="1997" name="Science">
        <title>The complete genome sequence of Escherichia coli K-12.</title>
        <authorList>
            <person name="Blattner F.R."/>
            <person name="Plunkett G. III"/>
            <person name="Bloch C.A."/>
            <person name="Perna N.T."/>
            <person name="Burland V."/>
            <person name="Riley M."/>
            <person name="Collado-Vides J."/>
            <person name="Glasner J.D."/>
            <person name="Rode C.K."/>
            <person name="Mayhew G.F."/>
            <person name="Gregor J."/>
            <person name="Davis N.W."/>
            <person name="Kirkpatrick H.A."/>
            <person name="Goeden M.A."/>
            <person name="Rose D.J."/>
            <person name="Mau B."/>
            <person name="Shao Y."/>
        </authorList>
    </citation>
    <scope>NUCLEOTIDE SEQUENCE [LARGE SCALE GENOMIC DNA]</scope>
    <source>
        <strain>K12 / MG1655 / ATCC 47076</strain>
    </source>
</reference>
<reference key="4">
    <citation type="journal article" date="2006" name="Mol. Syst. Biol.">
        <title>Highly accurate genome sequences of Escherichia coli K-12 strains MG1655 and W3110.</title>
        <authorList>
            <person name="Hayashi K."/>
            <person name="Morooka N."/>
            <person name="Yamamoto Y."/>
            <person name="Fujita K."/>
            <person name="Isono K."/>
            <person name="Choi S."/>
            <person name="Ohtsubo E."/>
            <person name="Baba T."/>
            <person name="Wanner B.L."/>
            <person name="Mori H."/>
            <person name="Horiuchi T."/>
        </authorList>
    </citation>
    <scope>NUCLEOTIDE SEQUENCE [LARGE SCALE GENOMIC DNA]</scope>
    <source>
        <strain>K12 / W3110 / ATCC 27325 / DSM 5911</strain>
    </source>
</reference>
<reference key="5">
    <citation type="journal article" date="1997" name="Electrophoresis">
        <title>Comparing the predicted and observed properties of proteins encoded in the genome of Escherichia coli K-12.</title>
        <authorList>
            <person name="Link A.J."/>
            <person name="Robison K."/>
            <person name="Church G.M."/>
        </authorList>
    </citation>
    <scope>PROTEIN SEQUENCE OF 2-12</scope>
    <source>
        <strain>K12 / EMG2</strain>
    </source>
</reference>
<reference key="6">
    <citation type="journal article" date="1983" name="J. Biol. Chem.">
        <title>Identification of lactaldehyde dehydrogenase and glycolaldehyde dehydrogenase as functions of the same protein in Escherichia coli.</title>
        <authorList>
            <person name="Caballero E."/>
            <person name="Baldoma L."/>
            <person name="Ros J."/>
            <person name="Boronat A."/>
            <person name="Aguilar J."/>
        </authorList>
    </citation>
    <scope>FUNCTION</scope>
    <scope>CATALYTIC ACTIVITY</scope>
    <scope>INDUCTION</scope>
    <source>
        <strain>K12</strain>
    </source>
</reference>
<reference key="7">
    <citation type="journal article" date="1987" name="J. Bacteriol.">
        <title>NAD-linked aldehyde dehydrogenase for aerobic utilization of L-fucose and L-rhamnose by Escherichia coli.</title>
        <authorList>
            <person name="Chen Y.M."/>
            <person name="Zhu Y."/>
            <person name="Lin E.C."/>
        </authorList>
    </citation>
    <scope>FUNCTION</scope>
    <scope>CATALYTIC ACTIVITY</scope>
    <scope>PATHWAY</scope>
    <source>
        <strain>K12</strain>
    </source>
</reference>
<reference key="8">
    <citation type="journal article" date="1987" name="J. Biol. Chem.">
        <title>Involvement of lactaldehyde dehydrogenase in several metabolic pathways of Escherichia coli K12.</title>
        <authorList>
            <person name="Baldoma L."/>
            <person name="Aguilar J."/>
        </authorList>
    </citation>
    <scope>FUNCTION</scope>
    <scope>CATALYTIC ACTIVITY</scope>
    <scope>ACTIVITY REGULATION</scope>
    <scope>BIOPHYSICOCHEMICAL PROPERTIES</scope>
    <scope>SUBUNIT</scope>
    <scope>INDUCTION</scope>
    <source>
        <strain>K12</strain>
    </source>
</reference>
<reference key="9">
    <citation type="journal article" date="1988" name="J. Bacteriol.">
        <title>Metabolism of L-fucose and L-rhamnose in Escherichia coli: aerobic-anaerobic regulation of L-lactaldehyde dissimilation.</title>
        <authorList>
            <person name="Baldoma L."/>
            <person name="Aguilar J."/>
        </authorList>
    </citation>
    <scope>FUNCTION</scope>
    <scope>CATALYTIC ACTIVITY</scope>
    <scope>ACTIVITY REGULATION</scope>
    <scope>PATHWAY</scope>
    <scope>INDUCTION</scope>
    <source>
        <strain>K12</strain>
    </source>
</reference>
<reference key="10">
    <citation type="journal article" date="2006" name="Protein Sci.">
        <title>Characterization of E. coli tetrameric aldehyde dehydrogenases with atypical properties compared to other aldehyde dehydrogenases.</title>
        <authorList>
            <person name="Rodriguez-Zavala J.S."/>
            <person name="Allali-Hassani A."/>
            <person name="Weiner H."/>
        </authorList>
    </citation>
    <scope>FUNCTION</scope>
    <scope>CATALYTIC ACTIVITY</scope>
    <scope>BIOPHYSICOCHEMICAL PROPERTIES</scope>
    <scope>SUBUNIT</scope>
</reference>
<reference key="11">
    <citation type="journal article" date="2008" name="Protein Sci.">
        <title>Enhancement of coenzyme binding by a single point mutation at the coenzyme binding domain of E. coli lactaldehyde dehydrogenase.</title>
        <authorList>
            <person name="Rodriguez-Zavala J.S."/>
        </authorList>
    </citation>
    <scope>MUTAGENESIS OF PHE-180</scope>
</reference>
<reference key="12">
    <citation type="journal article" date="2016" name="Biosci. Biotechnol. Biochem.">
        <title>A new NAD+-dependent glyceraldehyde dehydrogenase obtained by rational design of L-lactaldehyde dehydrogenase from Escherichia coli.</title>
        <authorList>
            <person name="Wu X."/>
            <person name="Xu L."/>
            <person name="Yan M."/>
        </authorList>
    </citation>
    <scope>FUNCTION</scope>
    <scope>CATALYTIC ACTIVITY</scope>
    <scope>BIOPHYSICOCHEMICAL PROPERTIES</scope>
    <scope>MUTAGENESIS OF ASN-286</scope>
</reference>
<reference key="13">
    <citation type="journal article" date="2019" name="Front. Bioeng. Biotechnol.">
        <title>A new synthetic pathway for the bioproduction of glycolic acid from lignocellulosic sugars aimed at maximal carbon conservation.</title>
        <authorList>
            <person name="Lachaux C."/>
            <person name="Frazao C.J.R."/>
            <person name="Kraubetaer F."/>
            <person name="Morin N."/>
            <person name="Walther T."/>
            <person name="Francois J.M."/>
        </authorList>
    </citation>
    <scope>FUNCTION</scope>
    <scope>CATALYTIC ACTIVITY</scope>
    <scope>BIOPHYSICOCHEMICAL PROPERTIES</scope>
</reference>
<reference evidence="17 18 19" key="14">
    <citation type="journal article" date="2007" name="J. Mol. Biol.">
        <title>Crystal structure of lactaldehyde dehydrogenase from Escherichia coli and inferences regarding substrate and cofactor specificity.</title>
        <authorList>
            <person name="Di Costanzo L."/>
            <person name="Gomez G.A."/>
            <person name="Christianson D.W."/>
        </authorList>
    </citation>
    <scope>X-RAY CRYSTALLOGRAPHY (2.10 ANGSTROMS) OF APOENZYME AND IN COMPLEXES WITH LACTATE; NAD AND NADP</scope>
    <scope>SUBUNIT</scope>
    <scope>ACTIVE SITE</scope>
</reference>
<reference evidence="20" key="15">
    <citation type="submission" date="2007-01" db="PDB data bank">
        <title>Crystal structure of lactaldehyde dehydrogenase from Escherichia coli.</title>
        <authorList>
            <person name="Francuski D."/>
            <person name="Rossocha M."/>
            <person name="Saenger W."/>
        </authorList>
    </citation>
    <scope>X-RAY CRYSTALLOGRAPHY (2.53 ANGSTROMS)</scope>
</reference>
<protein>
    <recommendedName>
        <fullName evidence="13">Lactaldehyde dehydrogenase</fullName>
        <ecNumber evidence="5 8 9 10">1.2.1.22</ecNumber>
    </recommendedName>
    <alternativeName>
        <fullName>Aldehyde dehydrogenase A</fullName>
    </alternativeName>
    <alternativeName>
        <fullName evidence="13">Glycolaldehyde dehydrogenase</fullName>
        <ecNumber evidence="1 6 7 9 10">1.2.1.21</ecNumber>
    </alternativeName>
</protein>
<accession>P25553</accession>